<organism>
    <name type="scientific">Mus musculus</name>
    <name type="common">Mouse</name>
    <dbReference type="NCBI Taxonomy" id="10090"/>
    <lineage>
        <taxon>Eukaryota</taxon>
        <taxon>Metazoa</taxon>
        <taxon>Chordata</taxon>
        <taxon>Craniata</taxon>
        <taxon>Vertebrata</taxon>
        <taxon>Euteleostomi</taxon>
        <taxon>Mammalia</taxon>
        <taxon>Eutheria</taxon>
        <taxon>Euarchontoglires</taxon>
        <taxon>Glires</taxon>
        <taxon>Rodentia</taxon>
        <taxon>Myomorpha</taxon>
        <taxon>Muroidea</taxon>
        <taxon>Muridae</taxon>
        <taxon>Murinae</taxon>
        <taxon>Mus</taxon>
        <taxon>Mus</taxon>
    </lineage>
</organism>
<comment type="function">
    <text>Possible candidate as a tumor suppressor gene of neuroblastoma. May play an important role in preventing cells from entering the final stage (G1/S) of the transformation process.</text>
</comment>
<comment type="subunit">
    <text evidence="4">Homodimer.</text>
</comment>
<comment type="subcellular location">
    <subcellularLocation>
        <location evidence="4">Secreted</location>
    </subcellularLocation>
</comment>
<comment type="similarity">
    <text evidence="5">Belongs to the DAN family.</text>
</comment>
<feature type="signal peptide" evidence="2">
    <location>
        <begin position="1"/>
        <end position="16"/>
    </location>
</feature>
<feature type="chain" id="PRO_0000006723" description="Neuroblastoma suppressor of tumorigenicity 1">
    <location>
        <begin position="17"/>
        <end position="178"/>
    </location>
</feature>
<feature type="domain" description="CTCK">
    <location>
        <begin position="34"/>
        <end position="123"/>
    </location>
</feature>
<feature type="region of interest" description="Disordered" evidence="3">
    <location>
        <begin position="132"/>
        <end position="178"/>
    </location>
</feature>
<feature type="compositionally biased region" description="Low complexity" evidence="3">
    <location>
        <begin position="140"/>
        <end position="160"/>
    </location>
</feature>
<feature type="disulfide bond" evidence="1">
    <location>
        <begin position="34"/>
        <end position="84"/>
    </location>
</feature>
<feature type="disulfide bond" evidence="1">
    <location>
        <begin position="48"/>
        <end position="98"/>
    </location>
</feature>
<feature type="disulfide bond" evidence="1">
    <location>
        <begin position="58"/>
        <end position="117"/>
    </location>
</feature>
<feature type="disulfide bond" evidence="1">
    <location>
        <begin position="62"/>
        <end position="119"/>
    </location>
</feature>
<feature type="disulfide bond" evidence="2">
    <location>
        <begin position="81"/>
        <end position="122"/>
    </location>
</feature>
<feature type="sequence conflict" description="In Ref. 1; BAA08817." evidence="5" ref="1">
    <original>G</original>
    <variation>D</variation>
    <location>
        <position position="100"/>
    </location>
</feature>
<dbReference type="EMBL" id="D50263">
    <property type="protein sequence ID" value="BAA08817.1"/>
    <property type="molecule type" value="mRNA"/>
</dbReference>
<dbReference type="EMBL" id="AK133787">
    <property type="protein sequence ID" value="BAE21841.1"/>
    <property type="molecule type" value="mRNA"/>
</dbReference>
<dbReference type="EMBL" id="AK146535">
    <property type="protein sequence ID" value="BAE27241.1"/>
    <property type="molecule type" value="mRNA"/>
</dbReference>
<dbReference type="EMBL" id="AK158008">
    <property type="protein sequence ID" value="BAE34315.1"/>
    <property type="molecule type" value="mRNA"/>
</dbReference>
<dbReference type="EMBL" id="AL805923">
    <property type="status" value="NOT_ANNOTATED_CDS"/>
    <property type="molecule type" value="Genomic_DNA"/>
</dbReference>
<dbReference type="EMBL" id="CH466615">
    <property type="protein sequence ID" value="EDL13294.1"/>
    <property type="molecule type" value="Genomic_DNA"/>
</dbReference>
<dbReference type="EMBL" id="BC099856">
    <property type="protein sequence ID" value="AAH99856.1"/>
    <property type="molecule type" value="mRNA"/>
</dbReference>
<dbReference type="EMBL" id="BC099857">
    <property type="protein sequence ID" value="AAH99857.1"/>
    <property type="molecule type" value="mRNA"/>
</dbReference>
<dbReference type="EMBL" id="BC099858">
    <property type="protein sequence ID" value="AAH99858.1"/>
    <property type="molecule type" value="mRNA"/>
</dbReference>
<dbReference type="EMBL" id="BC107810">
    <property type="protein sequence ID" value="AAI07811.1"/>
    <property type="molecule type" value="mRNA"/>
</dbReference>
<dbReference type="CCDS" id="CCDS18839.1"/>
<dbReference type="RefSeq" id="NP_032701.2">
    <property type="nucleotide sequence ID" value="NM_008675.2"/>
</dbReference>
<dbReference type="RefSeq" id="XP_006538688.1">
    <property type="nucleotide sequence ID" value="XM_006538625.5"/>
</dbReference>
<dbReference type="RefSeq" id="XP_006538689.1">
    <property type="nucleotide sequence ID" value="XM_006538626.3"/>
</dbReference>
<dbReference type="RefSeq" id="XP_030109159.1">
    <property type="nucleotide sequence ID" value="XM_030253299.2"/>
</dbReference>
<dbReference type="RefSeq" id="XP_030109160.1">
    <property type="nucleotide sequence ID" value="XM_030253300.1"/>
</dbReference>
<dbReference type="RefSeq" id="XP_030109161.1">
    <property type="nucleotide sequence ID" value="XM_030253301.2"/>
</dbReference>
<dbReference type="RefSeq" id="XP_036019701.1">
    <property type="nucleotide sequence ID" value="XM_036163808.1"/>
</dbReference>
<dbReference type="SMR" id="Q61477"/>
<dbReference type="BioGRID" id="201697">
    <property type="interactions" value="1"/>
</dbReference>
<dbReference type="FunCoup" id="Q61477">
    <property type="interactions" value="597"/>
</dbReference>
<dbReference type="MINT" id="Q61477"/>
<dbReference type="STRING" id="10090.ENSMUSP00000045608"/>
<dbReference type="GlyConnect" id="2544">
    <property type="glycosylation" value="1 N-Linked glycan (1 site)"/>
</dbReference>
<dbReference type="GlyCosmos" id="Q61477">
    <property type="glycosylation" value="1 site, 1 glycan"/>
</dbReference>
<dbReference type="GlyGen" id="Q61477">
    <property type="glycosylation" value="1 site, 2 N-linked glycans (1 site)"/>
</dbReference>
<dbReference type="iPTMnet" id="Q61477"/>
<dbReference type="PhosphoSitePlus" id="Q61477"/>
<dbReference type="CPTAC" id="non-CPTAC-3393"/>
<dbReference type="jPOST" id="Q61477"/>
<dbReference type="PaxDb" id="10090-ENSMUSP00000045608"/>
<dbReference type="PeptideAtlas" id="Q61477"/>
<dbReference type="ProteomicsDB" id="252788"/>
<dbReference type="Antibodypedia" id="29695">
    <property type="antibodies" value="320 antibodies from 33 providers"/>
</dbReference>
<dbReference type="DNASU" id="17965"/>
<dbReference type="Ensembl" id="ENSMUST00000042844.7">
    <property type="protein sequence ID" value="ENSMUSP00000045608.7"/>
    <property type="gene ID" value="ENSMUSG00000041120.7"/>
</dbReference>
<dbReference type="GeneID" id="17965"/>
<dbReference type="KEGG" id="mmu:17965"/>
<dbReference type="UCSC" id="uc008vls.1">
    <property type="organism name" value="mouse"/>
</dbReference>
<dbReference type="AGR" id="MGI:104591"/>
<dbReference type="CTD" id="4681"/>
<dbReference type="MGI" id="MGI:104591">
    <property type="gene designation" value="Nbl1"/>
</dbReference>
<dbReference type="VEuPathDB" id="HostDB:ENSMUSG00000041120"/>
<dbReference type="eggNOG" id="ENOG502RYP0">
    <property type="taxonomic scope" value="Eukaryota"/>
</dbReference>
<dbReference type="GeneTree" id="ENSGT00940000154209"/>
<dbReference type="HOGENOM" id="CLU_115450_0_0_1"/>
<dbReference type="InParanoid" id="Q61477"/>
<dbReference type="OMA" id="QTMWEIV"/>
<dbReference type="OrthoDB" id="8196271at2759"/>
<dbReference type="PhylomeDB" id="Q61477"/>
<dbReference type="TreeFam" id="TF106445"/>
<dbReference type="BioGRID-ORCS" id="17965">
    <property type="hits" value="2 hits in 78 CRISPR screens"/>
</dbReference>
<dbReference type="ChiTaRS" id="Nbl1">
    <property type="organism name" value="mouse"/>
</dbReference>
<dbReference type="PRO" id="PR:Q61477"/>
<dbReference type="Proteomes" id="UP000000589">
    <property type="component" value="Chromosome 4"/>
</dbReference>
<dbReference type="RNAct" id="Q61477">
    <property type="molecule type" value="protein"/>
</dbReference>
<dbReference type="Bgee" id="ENSMUSG00000041120">
    <property type="expression patterns" value="Expressed in lip and 221 other cell types or tissues"/>
</dbReference>
<dbReference type="GO" id="GO:0005615">
    <property type="term" value="C:extracellular space"/>
    <property type="evidence" value="ECO:0000250"/>
    <property type="project" value="UniProtKB"/>
</dbReference>
<dbReference type="GO" id="GO:0036122">
    <property type="term" value="F:BMP binding"/>
    <property type="evidence" value="ECO:0000314"/>
    <property type="project" value="BHF-UCL"/>
</dbReference>
<dbReference type="GO" id="GO:0042802">
    <property type="term" value="F:identical protein binding"/>
    <property type="evidence" value="ECO:0007669"/>
    <property type="project" value="Ensembl"/>
</dbReference>
<dbReference type="GO" id="GO:0016015">
    <property type="term" value="F:morphogen activity"/>
    <property type="evidence" value="ECO:0000314"/>
    <property type="project" value="BHF-UCL"/>
</dbReference>
<dbReference type="GO" id="GO:0048263">
    <property type="term" value="P:determination of dorsal identity"/>
    <property type="evidence" value="ECO:0000315"/>
    <property type="project" value="BHF-UCL"/>
</dbReference>
<dbReference type="GO" id="GO:0030514">
    <property type="term" value="P:negative regulation of BMP signaling pathway"/>
    <property type="evidence" value="ECO:0000314"/>
    <property type="project" value="MGI"/>
</dbReference>
<dbReference type="GO" id="GO:0090027">
    <property type="term" value="P:negative regulation of monocyte chemotaxis"/>
    <property type="evidence" value="ECO:0000314"/>
    <property type="project" value="BHF-UCL"/>
</dbReference>
<dbReference type="GO" id="GO:0007399">
    <property type="term" value="P:nervous system development"/>
    <property type="evidence" value="ECO:0000315"/>
    <property type="project" value="BHF-UCL"/>
</dbReference>
<dbReference type="GO" id="GO:0030182">
    <property type="term" value="P:neuron differentiation"/>
    <property type="evidence" value="ECO:0000314"/>
    <property type="project" value="MGI"/>
</dbReference>
<dbReference type="GO" id="GO:0048812">
    <property type="term" value="P:neuron projection morphogenesis"/>
    <property type="evidence" value="ECO:0000314"/>
    <property type="project" value="MGI"/>
</dbReference>
<dbReference type="GO" id="GO:0045666">
    <property type="term" value="P:positive regulation of neuron differentiation"/>
    <property type="evidence" value="ECO:0000314"/>
    <property type="project" value="MGI"/>
</dbReference>
<dbReference type="GO" id="GO:0038098">
    <property type="term" value="P:sequestering of BMP from receptor via BMP binding"/>
    <property type="evidence" value="ECO:0007669"/>
    <property type="project" value="Ensembl"/>
</dbReference>
<dbReference type="GO" id="GO:0035582">
    <property type="term" value="P:sequestering of BMP in extracellular matrix"/>
    <property type="evidence" value="ECO:0000314"/>
    <property type="project" value="BHF-UCL"/>
</dbReference>
<dbReference type="FunFam" id="2.10.90.10:FF:000016">
    <property type="entry name" value="Neuroblastoma suppressor of tumorigenicity 1"/>
    <property type="match status" value="1"/>
</dbReference>
<dbReference type="Gene3D" id="2.10.90.10">
    <property type="entry name" value="Cystine-knot cytokines"/>
    <property type="match status" value="1"/>
</dbReference>
<dbReference type="InterPro" id="IPR006207">
    <property type="entry name" value="Cys_knot_C"/>
</dbReference>
<dbReference type="InterPro" id="IPR029034">
    <property type="entry name" value="Cystine-knot_cytokine"/>
</dbReference>
<dbReference type="InterPro" id="IPR004133">
    <property type="entry name" value="DAN"/>
</dbReference>
<dbReference type="InterPro" id="IPR016728">
    <property type="entry name" value="Neuroblast_suppress_tumour_1"/>
</dbReference>
<dbReference type="PANTHER" id="PTHR15283">
    <property type="entry name" value="GREMLIN 1"/>
    <property type="match status" value="1"/>
</dbReference>
<dbReference type="PANTHER" id="PTHR15283:SF5">
    <property type="entry name" value="NEUROBLASTOMA SUPPRESSOR OF TUMORIGENICITY 1"/>
    <property type="match status" value="1"/>
</dbReference>
<dbReference type="Pfam" id="PF03045">
    <property type="entry name" value="DAN"/>
    <property type="match status" value="1"/>
</dbReference>
<dbReference type="PIRSF" id="PIRSF018557">
    <property type="entry name" value="DAN_sub"/>
    <property type="match status" value="1"/>
</dbReference>
<dbReference type="SMART" id="SM00041">
    <property type="entry name" value="CT"/>
    <property type="match status" value="1"/>
</dbReference>
<accession>Q61477</accession>
<accession>Q499K5</accession>
<evidence type="ECO:0000250" key="1"/>
<evidence type="ECO:0000255" key="2"/>
<evidence type="ECO:0000256" key="3">
    <source>
        <dbReference type="SAM" id="MobiDB-lite"/>
    </source>
</evidence>
<evidence type="ECO:0000269" key="4">
    <source>
    </source>
</evidence>
<evidence type="ECO:0000305" key="5"/>
<reference key="1">
    <citation type="journal article" date="1996" name="Jpn. J. Cancer Res.">
        <title>Cloning of mouse DAN cDNA and its down-regulation in transformed cells.</title>
        <authorList>
            <person name="Ozaki T."/>
            <person name="Ma J."/>
            <person name="Takenaga K."/>
            <person name="Sakiyama S."/>
        </authorList>
    </citation>
    <scope>NUCLEOTIDE SEQUENCE [MRNA]</scope>
</reference>
<reference key="2">
    <citation type="journal article" date="2005" name="Science">
        <title>The transcriptional landscape of the mammalian genome.</title>
        <authorList>
            <person name="Carninci P."/>
            <person name="Kasukawa T."/>
            <person name="Katayama S."/>
            <person name="Gough J."/>
            <person name="Frith M.C."/>
            <person name="Maeda N."/>
            <person name="Oyama R."/>
            <person name="Ravasi T."/>
            <person name="Lenhard B."/>
            <person name="Wells C."/>
            <person name="Kodzius R."/>
            <person name="Shimokawa K."/>
            <person name="Bajic V.B."/>
            <person name="Brenner S.E."/>
            <person name="Batalov S."/>
            <person name="Forrest A.R."/>
            <person name="Zavolan M."/>
            <person name="Davis M.J."/>
            <person name="Wilming L.G."/>
            <person name="Aidinis V."/>
            <person name="Allen J.E."/>
            <person name="Ambesi-Impiombato A."/>
            <person name="Apweiler R."/>
            <person name="Aturaliya R.N."/>
            <person name="Bailey T.L."/>
            <person name="Bansal M."/>
            <person name="Baxter L."/>
            <person name="Beisel K.W."/>
            <person name="Bersano T."/>
            <person name="Bono H."/>
            <person name="Chalk A.M."/>
            <person name="Chiu K.P."/>
            <person name="Choudhary V."/>
            <person name="Christoffels A."/>
            <person name="Clutterbuck D.R."/>
            <person name="Crowe M.L."/>
            <person name="Dalla E."/>
            <person name="Dalrymple B.P."/>
            <person name="de Bono B."/>
            <person name="Della Gatta G."/>
            <person name="di Bernardo D."/>
            <person name="Down T."/>
            <person name="Engstrom P."/>
            <person name="Fagiolini M."/>
            <person name="Faulkner G."/>
            <person name="Fletcher C.F."/>
            <person name="Fukushima T."/>
            <person name="Furuno M."/>
            <person name="Futaki S."/>
            <person name="Gariboldi M."/>
            <person name="Georgii-Hemming P."/>
            <person name="Gingeras T.R."/>
            <person name="Gojobori T."/>
            <person name="Green R.E."/>
            <person name="Gustincich S."/>
            <person name="Harbers M."/>
            <person name="Hayashi Y."/>
            <person name="Hensch T.K."/>
            <person name="Hirokawa N."/>
            <person name="Hill D."/>
            <person name="Huminiecki L."/>
            <person name="Iacono M."/>
            <person name="Ikeo K."/>
            <person name="Iwama A."/>
            <person name="Ishikawa T."/>
            <person name="Jakt M."/>
            <person name="Kanapin A."/>
            <person name="Katoh M."/>
            <person name="Kawasawa Y."/>
            <person name="Kelso J."/>
            <person name="Kitamura H."/>
            <person name="Kitano H."/>
            <person name="Kollias G."/>
            <person name="Krishnan S.P."/>
            <person name="Kruger A."/>
            <person name="Kummerfeld S.K."/>
            <person name="Kurochkin I.V."/>
            <person name="Lareau L.F."/>
            <person name="Lazarevic D."/>
            <person name="Lipovich L."/>
            <person name="Liu J."/>
            <person name="Liuni S."/>
            <person name="McWilliam S."/>
            <person name="Madan Babu M."/>
            <person name="Madera M."/>
            <person name="Marchionni L."/>
            <person name="Matsuda H."/>
            <person name="Matsuzawa S."/>
            <person name="Miki H."/>
            <person name="Mignone F."/>
            <person name="Miyake S."/>
            <person name="Morris K."/>
            <person name="Mottagui-Tabar S."/>
            <person name="Mulder N."/>
            <person name="Nakano N."/>
            <person name="Nakauchi H."/>
            <person name="Ng P."/>
            <person name="Nilsson R."/>
            <person name="Nishiguchi S."/>
            <person name="Nishikawa S."/>
            <person name="Nori F."/>
            <person name="Ohara O."/>
            <person name="Okazaki Y."/>
            <person name="Orlando V."/>
            <person name="Pang K.C."/>
            <person name="Pavan W.J."/>
            <person name="Pavesi G."/>
            <person name="Pesole G."/>
            <person name="Petrovsky N."/>
            <person name="Piazza S."/>
            <person name="Reed J."/>
            <person name="Reid J.F."/>
            <person name="Ring B.Z."/>
            <person name="Ringwald M."/>
            <person name="Rost B."/>
            <person name="Ruan Y."/>
            <person name="Salzberg S.L."/>
            <person name="Sandelin A."/>
            <person name="Schneider C."/>
            <person name="Schoenbach C."/>
            <person name="Sekiguchi K."/>
            <person name="Semple C.A."/>
            <person name="Seno S."/>
            <person name="Sessa L."/>
            <person name="Sheng Y."/>
            <person name="Shibata Y."/>
            <person name="Shimada H."/>
            <person name="Shimada K."/>
            <person name="Silva D."/>
            <person name="Sinclair B."/>
            <person name="Sperling S."/>
            <person name="Stupka E."/>
            <person name="Sugiura K."/>
            <person name="Sultana R."/>
            <person name="Takenaka Y."/>
            <person name="Taki K."/>
            <person name="Tammoja K."/>
            <person name="Tan S.L."/>
            <person name="Tang S."/>
            <person name="Taylor M.S."/>
            <person name="Tegner J."/>
            <person name="Teichmann S.A."/>
            <person name="Ueda H.R."/>
            <person name="van Nimwegen E."/>
            <person name="Verardo R."/>
            <person name="Wei C.L."/>
            <person name="Yagi K."/>
            <person name="Yamanishi H."/>
            <person name="Zabarovsky E."/>
            <person name="Zhu S."/>
            <person name="Zimmer A."/>
            <person name="Hide W."/>
            <person name="Bult C."/>
            <person name="Grimmond S.M."/>
            <person name="Teasdale R.D."/>
            <person name="Liu E.T."/>
            <person name="Brusic V."/>
            <person name="Quackenbush J."/>
            <person name="Wahlestedt C."/>
            <person name="Mattick J.S."/>
            <person name="Hume D.A."/>
            <person name="Kai C."/>
            <person name="Sasaki D."/>
            <person name="Tomaru Y."/>
            <person name="Fukuda S."/>
            <person name="Kanamori-Katayama M."/>
            <person name="Suzuki M."/>
            <person name="Aoki J."/>
            <person name="Arakawa T."/>
            <person name="Iida J."/>
            <person name="Imamura K."/>
            <person name="Itoh M."/>
            <person name="Kato T."/>
            <person name="Kawaji H."/>
            <person name="Kawagashira N."/>
            <person name="Kawashima T."/>
            <person name="Kojima M."/>
            <person name="Kondo S."/>
            <person name="Konno H."/>
            <person name="Nakano K."/>
            <person name="Ninomiya N."/>
            <person name="Nishio T."/>
            <person name="Okada M."/>
            <person name="Plessy C."/>
            <person name="Shibata K."/>
            <person name="Shiraki T."/>
            <person name="Suzuki S."/>
            <person name="Tagami M."/>
            <person name="Waki K."/>
            <person name="Watahiki A."/>
            <person name="Okamura-Oho Y."/>
            <person name="Suzuki H."/>
            <person name="Kawai J."/>
            <person name="Hayashizaki Y."/>
        </authorList>
    </citation>
    <scope>NUCLEOTIDE SEQUENCE [LARGE SCALE MRNA]</scope>
    <source>
        <strain>C57BL/6J</strain>
        <tissue>Amnion</tissue>
        <tissue>Inner ear</tissue>
    </source>
</reference>
<reference key="3">
    <citation type="journal article" date="2009" name="PLoS Biol.">
        <title>Lineage-specific biology revealed by a finished genome assembly of the mouse.</title>
        <authorList>
            <person name="Church D.M."/>
            <person name="Goodstadt L."/>
            <person name="Hillier L.W."/>
            <person name="Zody M.C."/>
            <person name="Goldstein S."/>
            <person name="She X."/>
            <person name="Bult C.J."/>
            <person name="Agarwala R."/>
            <person name="Cherry J.L."/>
            <person name="DiCuccio M."/>
            <person name="Hlavina W."/>
            <person name="Kapustin Y."/>
            <person name="Meric P."/>
            <person name="Maglott D."/>
            <person name="Birtle Z."/>
            <person name="Marques A.C."/>
            <person name="Graves T."/>
            <person name="Zhou S."/>
            <person name="Teague B."/>
            <person name="Potamousis K."/>
            <person name="Churas C."/>
            <person name="Place M."/>
            <person name="Herschleb J."/>
            <person name="Runnheim R."/>
            <person name="Forrest D."/>
            <person name="Amos-Landgraf J."/>
            <person name="Schwartz D.C."/>
            <person name="Cheng Z."/>
            <person name="Lindblad-Toh K."/>
            <person name="Eichler E.E."/>
            <person name="Ponting C.P."/>
        </authorList>
    </citation>
    <scope>NUCLEOTIDE SEQUENCE [LARGE SCALE GENOMIC DNA]</scope>
    <source>
        <strain>C57BL/6J</strain>
    </source>
</reference>
<reference key="4">
    <citation type="submission" date="2007-06" db="EMBL/GenBank/DDBJ databases">
        <authorList>
            <person name="Mural R.J."/>
            <person name="Adams M.D."/>
            <person name="Myers E.W."/>
            <person name="Smith H.O."/>
            <person name="Venter J.C."/>
        </authorList>
    </citation>
    <scope>NUCLEOTIDE SEQUENCE [LARGE SCALE GENOMIC DNA]</scope>
</reference>
<reference key="5">
    <citation type="journal article" date="2004" name="Genome Res.">
        <title>The status, quality, and expansion of the NIH full-length cDNA project: the Mammalian Gene Collection (MGC).</title>
        <authorList>
            <consortium name="The MGC Project Team"/>
        </authorList>
    </citation>
    <scope>NUCLEOTIDE SEQUENCE [LARGE SCALE MRNA]</scope>
</reference>
<reference key="6">
    <citation type="journal article" date="2012" name="J. Mol. Biol.">
        <title>Members of the DAN family are BMP antagonists that form highly stable noncovalent dimers.</title>
        <authorList>
            <person name="Kattamuri C."/>
            <person name="Luedeke D.M."/>
            <person name="Nolan K."/>
            <person name="Rankin S.A."/>
            <person name="Greis K.D."/>
            <person name="Zorn A.M."/>
            <person name="Thompson T.B."/>
        </authorList>
    </citation>
    <scope>SUBUNIT</scope>
    <scope>SUBCELLULAR LOCATION</scope>
</reference>
<protein>
    <recommendedName>
        <fullName>Neuroblastoma suppressor of tumorigenicity 1</fullName>
    </recommendedName>
    <alternativeName>
        <fullName>N03</fullName>
    </alternativeName>
    <alternativeName>
        <fullName>Zinc finger protein DAN</fullName>
    </alternativeName>
</protein>
<name>NBL1_MOUSE</name>
<sequence>MLWVLVGAVLPVMLLAAPPPINKLALFPDKSAWCEAKNITQIVGHSGCEAKSIQNRACLGQCFSYSVPNTFPQSTESLVHCDSCMPAQSMWEIVTLECPGHEEVPRVDKLVEKIVHCSCQACGKEPSHEGLNVYVQGEDSPGSQPGPHSHAHPHPGGQTPEPEEPPGAPQVEEEGAED</sequence>
<keyword id="KW-1015">Disulfide bond</keyword>
<keyword id="KW-1185">Reference proteome</keyword>
<keyword id="KW-0964">Secreted</keyword>
<keyword id="KW-0732">Signal</keyword>
<keyword id="KW-0043">Tumor suppressor</keyword>
<gene>
    <name type="primary">Nbl1</name>
    <name type="synonym">Dan</name>
    <name type="synonym">Dana</name>
</gene>
<proteinExistence type="evidence at protein level"/>